<reference key="1">
    <citation type="submission" date="2015-09" db="EMBL/GenBank/DDBJ databases">
        <authorList>
            <consortium name="Swine Surveillance"/>
        </authorList>
    </citation>
    <scope>NUCLEOTIDE SEQUENCE [MRNA]</scope>
    <source>
        <strain>C.Lo959</strain>
    </source>
</reference>
<reference key="2">
    <citation type="journal article" date="2017" name="J. Proteome Res.">
        <title>Contryphan genes and mature peptides in the venom of nine cone snail species by transcriptomic and mass spectrometric analysis.</title>
        <authorList>
            <person name="Vijayasarathy M."/>
            <person name="Basheer S.M."/>
            <person name="Franklin J.B."/>
            <person name="Balaram P."/>
        </authorList>
    </citation>
    <scope>NUCLEOTIDE SEQUENCE [MRNA]</scope>
    <scope>MASS SPECTROMETRY</scope>
    <scope>D-AMINO ACID AT TRP-58</scope>
    <scope>AMIDATION AT CYS-62</scope>
    <scope>DISULFIDE BOND</scope>
    <source>
        <tissue>Venom</tissue>
        <tissue>Venom duct</tissue>
    </source>
</reference>
<reference key="3">
    <citation type="journal article" date="2005" name="Ann. N. Y. Acad. Sci.">
        <title>Novel peptides of therapeutic promise from Indian conidae.</title>
        <authorList>
            <person name="Gowd K.H."/>
            <person name="Sabareesh V."/>
            <person name="Sudarslal S."/>
            <person name="Iengar P."/>
            <person name="Franklin B."/>
            <person name="Fernando A."/>
            <person name="Dewan K."/>
            <person name="Ramaswami M."/>
            <person name="Sarma S.P."/>
            <person name="Sikdar S."/>
            <person name="Balaram P."/>
            <person name="Krishnan K.S."/>
        </authorList>
    </citation>
    <scope>PROTEIN SEQUENCE OF 55-62</scope>
    <scope>SUBCELLULAR LOCATION</scope>
    <source>
        <tissue>Venom</tissue>
    </source>
</reference>
<reference key="4">
    <citation type="journal article" date="2006" name="Peptides">
        <title>Characterization of contryphans from Conus loroisii and Conus amadis that target calcium channels.</title>
        <authorList>
            <person name="Sabareesh V."/>
            <person name="Gowd K.H."/>
            <person name="Ramasamy P."/>
            <person name="Sudarslal S."/>
            <person name="Krishnan K.S."/>
            <person name="Sikdar S.K."/>
            <person name="Balaram P."/>
        </authorList>
    </citation>
    <scope>PROTEIN SEQUENCE OF 55-62</scope>
    <scope>SYNTHESIS</scope>
    <scope>FUNCTION</scope>
    <scope>MASS SPECTROMETRY</scope>
    <scope>D-AMINO ACID AT TRP-58</scope>
    <scope>DISULFIDE BOND</scope>
    <scope>AMIDATION AT CYS-62</scope>
    <scope>SUBCELLULAR LOCATION</scope>
    <source>
        <tissue>Venom</tissue>
    </source>
</reference>
<reference key="5">
    <citation type="journal article" date="2007" name="Rapid Commun. Mass Spectrom.">
        <title>Rapid mass spectral identification of contryphans. Detection of characteristic peptide ions by fragmentation of intact disulfide-bonded peptides in crude venom.</title>
        <authorList>
            <person name="Thakur S.S."/>
            <person name="Balaram P."/>
        </authorList>
    </citation>
    <scope>PROTEIN SEQUENCE OF 55-62</scope>
    <scope>MASS SPECTROMETRY</scope>
    <scope>SUBCELLULAR LOCATION</scope>
    <scope>D-AMINO ACID AT TRP-58</scope>
    <scope>AMIDATION AT CYS-62</scope>
    <source>
        <tissue>Venom</tissue>
    </source>
</reference>
<reference key="6">
    <citation type="journal article" date="2013" name="Chemistry">
        <title>Conformational diversity in contryphans from Conus venom: cis-trans isomerisation and aromatic/proline interactions in the 23-membered ring of a 7-residue peptide disulfide loop.</title>
        <authorList>
            <person name="Sonti R."/>
            <person name="Gowd K.H."/>
            <person name="Rao K.N."/>
            <person name="Ragothama S."/>
            <person name="Rodriguez A."/>
            <person name="Perez J.J."/>
            <person name="Balaram P."/>
        </authorList>
    </citation>
    <scope>STRUCTURE BY NMR OF 55-62</scope>
    <scope>SYNTHESIS OF 55-62</scope>
    <scope>DISULFIDE BOND</scope>
    <scope>MUTAGENESIS OF PRO-57</scope>
    <scope>CIS-TRANS ISOMERIZATION</scope>
    <source>
        <tissue>Venom</tissue>
    </source>
</reference>
<protein>
    <recommendedName>
        <fullName evidence="8">Contryphan-Lo</fullName>
    </recommendedName>
    <alternativeName>
        <fullName evidence="12">Contryphan-Lo1</fullName>
    </alternativeName>
    <alternativeName>
        <fullName evidence="9 11">Lo959</fullName>
    </alternativeName>
    <component>
        <recommendedName>
            <fullName evidence="10">Contryphan-Lo Lo902</fullName>
        </recommendedName>
    </component>
</protein>
<comment type="function">
    <text evidence="4">Activates high voltage-activated calcium channels (Cav). This activity is in contrast to other contryphans that inhibit high voltage-gated calcium channels.</text>
</comment>
<comment type="subcellular location">
    <subcellularLocation>
        <location evidence="3 4">Secreted</location>
    </subcellularLocation>
</comment>
<comment type="tissue specificity">
    <text evidence="13 14">Expressed by the venom duct.</text>
</comment>
<comment type="domain">
    <text evidence="12">The cysteine framework is C-C.</text>
</comment>
<comment type="mass spectrometry">
    <molecule>Contryphan-Lo</molecule>
</comment>
<comment type="mass spectrometry">
    <molecule>Contryphan-Lo</molecule>
</comment>
<comment type="mass spectrometry">
    <molecule>Contryphan-Lo Lo902</molecule>
</comment>
<comment type="mass spectrometry">
    <molecule>Contryphan-Lo</molecule>
    <text>Monoisotopic mass.</text>
</comment>
<comment type="miscellaneous">
    <text evidence="6">Exists in two forms, due to cis-trans isomerization at 56-Cys-Pro-57.</text>
</comment>
<comment type="similarity">
    <text evidence="12">Belongs to the O2 superfamily. Contryphan family.</text>
</comment>
<proteinExistence type="evidence at protein level"/>
<dbReference type="EMBL" id="KT713759">
    <property type="protein sequence ID" value="ALI96902.1"/>
    <property type="molecule type" value="mRNA"/>
</dbReference>
<dbReference type="PDB" id="2M6G">
    <property type="method" value="NMR"/>
    <property type="chains" value="A=55-62"/>
</dbReference>
<dbReference type="PDB" id="2M6H">
    <property type="method" value="NMR"/>
    <property type="chains" value="A=55-62"/>
</dbReference>
<dbReference type="PDBsum" id="2M6G"/>
<dbReference type="PDBsum" id="2M6H"/>
<dbReference type="SMR" id="P0C250"/>
<dbReference type="ConoServer" id="1272">
    <property type="toxin name" value="Contryphan-Lo1"/>
</dbReference>
<dbReference type="EvolutionaryTrace" id="P0C250"/>
<dbReference type="GO" id="GO:0005576">
    <property type="term" value="C:extracellular region"/>
    <property type="evidence" value="ECO:0007669"/>
    <property type="project" value="UniProtKB-SubCell"/>
</dbReference>
<dbReference type="GO" id="GO:0005246">
    <property type="term" value="F:calcium channel regulator activity"/>
    <property type="evidence" value="ECO:0007669"/>
    <property type="project" value="UniProtKB-KW"/>
</dbReference>
<dbReference type="GO" id="GO:0008200">
    <property type="term" value="F:ion channel inhibitor activity"/>
    <property type="evidence" value="ECO:0007669"/>
    <property type="project" value="InterPro"/>
</dbReference>
<dbReference type="GO" id="GO:0090729">
    <property type="term" value="F:toxin activity"/>
    <property type="evidence" value="ECO:0007669"/>
    <property type="project" value="UniProtKB-KW"/>
</dbReference>
<dbReference type="InterPro" id="IPR004214">
    <property type="entry name" value="Conotoxin"/>
</dbReference>
<dbReference type="InterPro" id="IPR011062">
    <property type="entry name" value="Contryphan_CS"/>
</dbReference>
<dbReference type="Pfam" id="PF02950">
    <property type="entry name" value="Conotoxin"/>
    <property type="match status" value="1"/>
</dbReference>
<dbReference type="PROSITE" id="PS60027">
    <property type="entry name" value="CONTRYPHAN"/>
    <property type="match status" value="1"/>
</dbReference>
<keyword id="KW-0002">3D-structure</keyword>
<keyword id="KW-0027">Amidation</keyword>
<keyword id="KW-0108">Calcium channel impairing toxin</keyword>
<keyword id="KW-0208">D-amino acid</keyword>
<keyword id="KW-0903">Direct protein sequencing</keyword>
<keyword id="KW-1015">Disulfide bond</keyword>
<keyword id="KW-0872">Ion channel impairing toxin</keyword>
<keyword id="KW-0528">Neurotoxin</keyword>
<keyword id="KW-0964">Secreted</keyword>
<keyword id="KW-0732">Signal</keyword>
<keyword id="KW-0800">Toxin</keyword>
<keyword id="KW-1218">Voltage-gated calcium channel impairing toxin</keyword>
<evidence type="ECO:0000255" key="1"/>
<evidence type="ECO:0000256" key="2">
    <source>
        <dbReference type="SAM" id="MobiDB-lite"/>
    </source>
</evidence>
<evidence type="ECO:0000269" key="3">
    <source>
    </source>
</evidence>
<evidence type="ECO:0000269" key="4">
    <source>
    </source>
</evidence>
<evidence type="ECO:0000269" key="5">
    <source>
    </source>
</evidence>
<evidence type="ECO:0000269" key="6">
    <source>
    </source>
</evidence>
<evidence type="ECO:0000269" key="7">
    <source>
    </source>
</evidence>
<evidence type="ECO:0000303" key="8">
    <source>
    </source>
</evidence>
<evidence type="ECO:0000303" key="9">
    <source>
    </source>
</evidence>
<evidence type="ECO:0000303" key="10">
    <source>
    </source>
</evidence>
<evidence type="ECO:0000303" key="11">
    <source>
    </source>
</evidence>
<evidence type="ECO:0000305" key="12"/>
<evidence type="ECO:0000305" key="13">
    <source>
    </source>
</evidence>
<evidence type="ECO:0000305" key="14">
    <source>
    </source>
</evidence>
<evidence type="ECO:0000305" key="15">
    <source>
    </source>
</evidence>
<evidence type="ECO:0000312" key="16">
    <source>
        <dbReference type="PDB" id="2M6G"/>
    </source>
</evidence>
<evidence type="ECO:0000312" key="17">
    <source>
        <dbReference type="PDB" id="2M6H"/>
    </source>
</evidence>
<evidence type="ECO:0007829" key="18">
    <source>
        <dbReference type="PDB" id="2M6G"/>
    </source>
</evidence>
<organism>
    <name type="scientific">Conus buxeus loroisii</name>
    <name type="common">Cone snail</name>
    <name type="synonym">Conus loroisii</name>
    <dbReference type="NCBI Taxonomy" id="410709"/>
    <lineage>
        <taxon>Eukaryota</taxon>
        <taxon>Metazoa</taxon>
        <taxon>Spiralia</taxon>
        <taxon>Lophotrochozoa</taxon>
        <taxon>Mollusca</taxon>
        <taxon>Gastropoda</taxon>
        <taxon>Caenogastropoda</taxon>
        <taxon>Neogastropoda</taxon>
        <taxon>Conoidea</taxon>
        <taxon>Conidae</taxon>
        <taxon>Conus</taxon>
        <taxon>Dendroconus</taxon>
    </lineage>
</organism>
<accession>P0C250</accession>
<accession>A0A0P0CT07</accession>
<feature type="signal peptide" evidence="1">
    <location>
        <begin position="1"/>
        <end position="23"/>
    </location>
</feature>
<feature type="propeptide" id="PRO_0000445123" evidence="12">
    <location>
        <begin position="24"/>
        <end position="54"/>
    </location>
</feature>
<feature type="peptide" id="PRO_0000262670" description="Contryphan-Lo" evidence="3 4 5">
    <location>
        <begin position="55"/>
        <end position="62"/>
    </location>
</feature>
<feature type="peptide" id="PRO_0000439694" description="Contryphan-Lo Lo902" evidence="5">
    <location>
        <begin position="56"/>
        <end position="62"/>
    </location>
</feature>
<feature type="region of interest" description="Disordered" evidence="2">
    <location>
        <begin position="25"/>
        <end position="46"/>
    </location>
</feature>
<feature type="compositionally biased region" description="Basic and acidic residues" evidence="2">
    <location>
        <begin position="28"/>
        <end position="39"/>
    </location>
</feature>
<feature type="modified residue" description="D-tryptophan" evidence="4 15">
    <location>
        <position position="58"/>
    </location>
</feature>
<feature type="modified residue" description="Cysteine amide" evidence="4 7">
    <location>
        <position position="62"/>
    </location>
</feature>
<feature type="disulfide bond" evidence="4 6 7 16 17">
    <location>
        <begin position="56"/>
        <end position="62"/>
    </location>
</feature>
<feature type="mutagenesis site" description="Abolishes the very slow conformation equilibrium." evidence="6">
    <original>P</original>
    <variation>V</variation>
    <location>
        <position position="57"/>
    </location>
</feature>
<feature type="turn" evidence="18">
    <location>
        <begin position="56"/>
        <end position="58"/>
    </location>
</feature>
<sequence>MGKLTILVLVAAVLLSTQVMVQGDGDQPADRNAVRRDDNPGGTRGRFMNILRRTGCPWDPWCG</sequence>
<name>COW1_CONBL</name>